<reference key="1">
    <citation type="submission" date="2007-02" db="EMBL/GenBank/DDBJ databases">
        <title>Complete sequence of chromosome 1 of Rhodobacter sphaeroides ATCC 17029.</title>
        <authorList>
            <person name="Copeland A."/>
            <person name="Lucas S."/>
            <person name="Lapidus A."/>
            <person name="Barry K."/>
            <person name="Detter J.C."/>
            <person name="Glavina del Rio T."/>
            <person name="Hammon N."/>
            <person name="Israni S."/>
            <person name="Dalin E."/>
            <person name="Tice H."/>
            <person name="Pitluck S."/>
            <person name="Kiss H."/>
            <person name="Brettin T."/>
            <person name="Bruce D."/>
            <person name="Han C."/>
            <person name="Tapia R."/>
            <person name="Gilna P."/>
            <person name="Schmutz J."/>
            <person name="Larimer F."/>
            <person name="Land M."/>
            <person name="Hauser L."/>
            <person name="Kyrpides N."/>
            <person name="Mikhailova N."/>
            <person name="Richardson P."/>
            <person name="Mackenzie C."/>
            <person name="Choudhary M."/>
            <person name="Donohue T.J."/>
            <person name="Kaplan S."/>
        </authorList>
    </citation>
    <scope>NUCLEOTIDE SEQUENCE [LARGE SCALE GENOMIC DNA]</scope>
    <source>
        <strain>ATCC 17029 / ATH 2.4.9</strain>
    </source>
</reference>
<organism>
    <name type="scientific">Cereibacter sphaeroides (strain ATCC 17029 / ATH 2.4.9)</name>
    <name type="common">Rhodobacter sphaeroides</name>
    <dbReference type="NCBI Taxonomy" id="349101"/>
    <lineage>
        <taxon>Bacteria</taxon>
        <taxon>Pseudomonadati</taxon>
        <taxon>Pseudomonadota</taxon>
        <taxon>Alphaproteobacteria</taxon>
        <taxon>Rhodobacterales</taxon>
        <taxon>Paracoccaceae</taxon>
        <taxon>Cereibacter</taxon>
    </lineage>
</organism>
<name>DDL_CERS1</name>
<dbReference type="EC" id="6.3.2.4" evidence="2"/>
<dbReference type="EMBL" id="CP000577">
    <property type="protein sequence ID" value="ABN75898.1"/>
    <property type="molecule type" value="Genomic_DNA"/>
</dbReference>
<dbReference type="RefSeq" id="WP_011337244.1">
    <property type="nucleotide sequence ID" value="NC_009049.1"/>
</dbReference>
<dbReference type="SMR" id="A3PHT2"/>
<dbReference type="GeneID" id="3719582"/>
<dbReference type="KEGG" id="rsh:Rsph17029_0787"/>
<dbReference type="HOGENOM" id="CLU_039268_1_1_5"/>
<dbReference type="UniPathway" id="UPA00219"/>
<dbReference type="GO" id="GO:0005737">
    <property type="term" value="C:cytoplasm"/>
    <property type="evidence" value="ECO:0007669"/>
    <property type="project" value="UniProtKB-SubCell"/>
</dbReference>
<dbReference type="GO" id="GO:0005524">
    <property type="term" value="F:ATP binding"/>
    <property type="evidence" value="ECO:0007669"/>
    <property type="project" value="UniProtKB-KW"/>
</dbReference>
<dbReference type="GO" id="GO:0008716">
    <property type="term" value="F:D-alanine-D-alanine ligase activity"/>
    <property type="evidence" value="ECO:0007669"/>
    <property type="project" value="UniProtKB-UniRule"/>
</dbReference>
<dbReference type="GO" id="GO:0046872">
    <property type="term" value="F:metal ion binding"/>
    <property type="evidence" value="ECO:0007669"/>
    <property type="project" value="UniProtKB-KW"/>
</dbReference>
<dbReference type="GO" id="GO:0071555">
    <property type="term" value="P:cell wall organization"/>
    <property type="evidence" value="ECO:0007669"/>
    <property type="project" value="UniProtKB-KW"/>
</dbReference>
<dbReference type="GO" id="GO:0009252">
    <property type="term" value="P:peptidoglycan biosynthetic process"/>
    <property type="evidence" value="ECO:0007669"/>
    <property type="project" value="UniProtKB-UniRule"/>
</dbReference>
<dbReference type="GO" id="GO:0008360">
    <property type="term" value="P:regulation of cell shape"/>
    <property type="evidence" value="ECO:0007669"/>
    <property type="project" value="UniProtKB-KW"/>
</dbReference>
<dbReference type="Gene3D" id="3.40.50.20">
    <property type="match status" value="1"/>
</dbReference>
<dbReference type="Gene3D" id="3.30.1490.20">
    <property type="entry name" value="ATP-grasp fold, A domain"/>
    <property type="match status" value="1"/>
</dbReference>
<dbReference type="Gene3D" id="3.30.470.20">
    <property type="entry name" value="ATP-grasp fold, B domain"/>
    <property type="match status" value="1"/>
</dbReference>
<dbReference type="HAMAP" id="MF_00047">
    <property type="entry name" value="Dala_Dala_lig"/>
    <property type="match status" value="1"/>
</dbReference>
<dbReference type="InterPro" id="IPR011761">
    <property type="entry name" value="ATP-grasp"/>
</dbReference>
<dbReference type="InterPro" id="IPR013815">
    <property type="entry name" value="ATP_grasp_subdomain_1"/>
</dbReference>
<dbReference type="InterPro" id="IPR000291">
    <property type="entry name" value="D-Ala_lig_Van_CS"/>
</dbReference>
<dbReference type="InterPro" id="IPR005905">
    <property type="entry name" value="D_ala_D_ala"/>
</dbReference>
<dbReference type="InterPro" id="IPR011095">
    <property type="entry name" value="Dala_Dala_lig_C"/>
</dbReference>
<dbReference type="InterPro" id="IPR011127">
    <property type="entry name" value="Dala_Dala_lig_N"/>
</dbReference>
<dbReference type="InterPro" id="IPR016185">
    <property type="entry name" value="PreATP-grasp_dom_sf"/>
</dbReference>
<dbReference type="NCBIfam" id="TIGR01205">
    <property type="entry name" value="D_ala_D_alaTIGR"/>
    <property type="match status" value="1"/>
</dbReference>
<dbReference type="NCBIfam" id="NF002378">
    <property type="entry name" value="PRK01372.1"/>
    <property type="match status" value="1"/>
</dbReference>
<dbReference type="PANTHER" id="PTHR23132">
    <property type="entry name" value="D-ALANINE--D-ALANINE LIGASE"/>
    <property type="match status" value="1"/>
</dbReference>
<dbReference type="PANTHER" id="PTHR23132:SF23">
    <property type="entry name" value="D-ALANINE--D-ALANINE LIGASE B"/>
    <property type="match status" value="1"/>
</dbReference>
<dbReference type="Pfam" id="PF07478">
    <property type="entry name" value="Dala_Dala_lig_C"/>
    <property type="match status" value="1"/>
</dbReference>
<dbReference type="Pfam" id="PF01820">
    <property type="entry name" value="Dala_Dala_lig_N"/>
    <property type="match status" value="1"/>
</dbReference>
<dbReference type="PIRSF" id="PIRSF039102">
    <property type="entry name" value="Ddl/VanB"/>
    <property type="match status" value="1"/>
</dbReference>
<dbReference type="SUPFAM" id="SSF56059">
    <property type="entry name" value="Glutathione synthetase ATP-binding domain-like"/>
    <property type="match status" value="1"/>
</dbReference>
<dbReference type="SUPFAM" id="SSF52440">
    <property type="entry name" value="PreATP-grasp domain"/>
    <property type="match status" value="1"/>
</dbReference>
<dbReference type="PROSITE" id="PS50975">
    <property type="entry name" value="ATP_GRASP"/>
    <property type="match status" value="1"/>
</dbReference>
<dbReference type="PROSITE" id="PS00843">
    <property type="entry name" value="DALA_DALA_LIGASE_1"/>
    <property type="match status" value="1"/>
</dbReference>
<dbReference type="PROSITE" id="PS00844">
    <property type="entry name" value="DALA_DALA_LIGASE_2"/>
    <property type="match status" value="1"/>
</dbReference>
<protein>
    <recommendedName>
        <fullName evidence="2">D-alanine--D-alanine ligase</fullName>
        <ecNumber evidence="2">6.3.2.4</ecNumber>
    </recommendedName>
    <alternativeName>
        <fullName evidence="2">D-Ala-D-Ala ligase</fullName>
    </alternativeName>
    <alternativeName>
        <fullName evidence="2">D-alanylalanine synthetase</fullName>
    </alternativeName>
</protein>
<accession>A3PHT2</accession>
<keyword id="KW-0067">ATP-binding</keyword>
<keyword id="KW-0133">Cell shape</keyword>
<keyword id="KW-0961">Cell wall biogenesis/degradation</keyword>
<keyword id="KW-0963">Cytoplasm</keyword>
<keyword id="KW-0436">Ligase</keyword>
<keyword id="KW-0460">Magnesium</keyword>
<keyword id="KW-0464">Manganese</keyword>
<keyword id="KW-0479">Metal-binding</keyword>
<keyword id="KW-0547">Nucleotide-binding</keyword>
<keyword id="KW-0573">Peptidoglycan synthesis</keyword>
<gene>
    <name evidence="2" type="primary">ddl</name>
    <name type="ordered locus">Rsph17029_0787</name>
</gene>
<sequence length="307" mass="32847">MAGQSGRTFPRVAVLMGGASTEREVSLSSGHSCSAALRDAGYEVTEVDAGPDLARVLAELSPDAVFNALHGRWGEDGCVQGLLEWLRIPYTHSGVLASALAMDKARAKEVFAAAGLPVTQSVLATPEEVRARHILPPPYVVKPNAEGSSVGVYIVHEDANGPPQLAADMPQDLMVETYVPGRELTVTVMGDRVLAVTDILSDGWYDYDAKYRPGGSRHIVPADLPAEITEACHDIALRAHRALGCRGISRSDLRWDEARGLAGLILLETNTQPGMTPTSLSPEQAAHCGYSFPEFCAWLVEDASCSR</sequence>
<proteinExistence type="inferred from homology"/>
<feature type="chain" id="PRO_0000341163" description="D-alanine--D-alanine ligase">
    <location>
        <begin position="1"/>
        <end position="307"/>
    </location>
</feature>
<feature type="domain" description="ATP-grasp" evidence="2">
    <location>
        <begin position="108"/>
        <end position="301"/>
    </location>
</feature>
<feature type="binding site" evidence="2">
    <location>
        <begin position="135"/>
        <end position="185"/>
    </location>
    <ligand>
        <name>ATP</name>
        <dbReference type="ChEBI" id="CHEBI:30616"/>
    </ligand>
</feature>
<feature type="binding site" evidence="2">
    <location>
        <position position="252"/>
    </location>
    <ligand>
        <name>Mg(2+)</name>
        <dbReference type="ChEBI" id="CHEBI:18420"/>
        <label>1</label>
    </ligand>
</feature>
<feature type="binding site" evidence="2">
    <location>
        <position position="268"/>
    </location>
    <ligand>
        <name>Mg(2+)</name>
        <dbReference type="ChEBI" id="CHEBI:18420"/>
        <label>1</label>
    </ligand>
</feature>
<feature type="binding site" evidence="2">
    <location>
        <position position="268"/>
    </location>
    <ligand>
        <name>Mg(2+)</name>
        <dbReference type="ChEBI" id="CHEBI:18420"/>
        <label>2</label>
    </ligand>
</feature>
<feature type="binding site" evidence="2">
    <location>
        <position position="270"/>
    </location>
    <ligand>
        <name>Mg(2+)</name>
        <dbReference type="ChEBI" id="CHEBI:18420"/>
        <label>2</label>
    </ligand>
</feature>
<comment type="function">
    <text evidence="2">Cell wall formation.</text>
</comment>
<comment type="catalytic activity">
    <reaction evidence="2">
        <text>2 D-alanine + ATP = D-alanyl-D-alanine + ADP + phosphate + H(+)</text>
        <dbReference type="Rhea" id="RHEA:11224"/>
        <dbReference type="ChEBI" id="CHEBI:15378"/>
        <dbReference type="ChEBI" id="CHEBI:30616"/>
        <dbReference type="ChEBI" id="CHEBI:43474"/>
        <dbReference type="ChEBI" id="CHEBI:57416"/>
        <dbReference type="ChEBI" id="CHEBI:57822"/>
        <dbReference type="ChEBI" id="CHEBI:456216"/>
        <dbReference type="EC" id="6.3.2.4"/>
    </reaction>
</comment>
<comment type="cofactor">
    <cofactor evidence="1">
        <name>Mg(2+)</name>
        <dbReference type="ChEBI" id="CHEBI:18420"/>
    </cofactor>
    <cofactor evidence="1">
        <name>Mn(2+)</name>
        <dbReference type="ChEBI" id="CHEBI:29035"/>
    </cofactor>
    <text evidence="1">Binds 2 magnesium or manganese ions per subunit.</text>
</comment>
<comment type="pathway">
    <text evidence="2">Cell wall biogenesis; peptidoglycan biosynthesis.</text>
</comment>
<comment type="subcellular location">
    <subcellularLocation>
        <location evidence="2">Cytoplasm</location>
    </subcellularLocation>
</comment>
<comment type="similarity">
    <text evidence="2">Belongs to the D-alanine--D-alanine ligase family.</text>
</comment>
<evidence type="ECO:0000250" key="1"/>
<evidence type="ECO:0000255" key="2">
    <source>
        <dbReference type="HAMAP-Rule" id="MF_00047"/>
    </source>
</evidence>